<protein>
    <recommendedName>
        <fullName evidence="1">Triosephosphate isomerase</fullName>
        <shortName evidence="1">TIM</shortName>
        <shortName evidence="1">TPI</shortName>
        <ecNumber evidence="1">5.3.1.1</ecNumber>
    </recommendedName>
    <alternativeName>
        <fullName evidence="1">Triose-phosphate isomerase</fullName>
    </alternativeName>
</protein>
<dbReference type="EC" id="5.3.1.1" evidence="1"/>
<dbReference type="EMBL" id="CP000776">
    <property type="protein sequence ID" value="ABS51749.1"/>
    <property type="molecule type" value="Genomic_DNA"/>
</dbReference>
<dbReference type="RefSeq" id="WP_012108642.1">
    <property type="nucleotide sequence ID" value="NC_009714.1"/>
</dbReference>
<dbReference type="SMR" id="A7I1G2"/>
<dbReference type="STRING" id="360107.CHAB381_0779"/>
<dbReference type="KEGG" id="cha:CHAB381_0779"/>
<dbReference type="eggNOG" id="COG0149">
    <property type="taxonomic scope" value="Bacteria"/>
</dbReference>
<dbReference type="HOGENOM" id="CLU_024251_2_3_7"/>
<dbReference type="OrthoDB" id="9809429at2"/>
<dbReference type="UniPathway" id="UPA00109">
    <property type="reaction ID" value="UER00189"/>
</dbReference>
<dbReference type="UniPathway" id="UPA00138"/>
<dbReference type="Proteomes" id="UP000002407">
    <property type="component" value="Chromosome"/>
</dbReference>
<dbReference type="GO" id="GO:0005829">
    <property type="term" value="C:cytosol"/>
    <property type="evidence" value="ECO:0007669"/>
    <property type="project" value="TreeGrafter"/>
</dbReference>
<dbReference type="GO" id="GO:0004807">
    <property type="term" value="F:triose-phosphate isomerase activity"/>
    <property type="evidence" value="ECO:0007669"/>
    <property type="project" value="UniProtKB-UniRule"/>
</dbReference>
<dbReference type="GO" id="GO:0006094">
    <property type="term" value="P:gluconeogenesis"/>
    <property type="evidence" value="ECO:0007669"/>
    <property type="project" value="UniProtKB-UniRule"/>
</dbReference>
<dbReference type="GO" id="GO:0046166">
    <property type="term" value="P:glyceraldehyde-3-phosphate biosynthetic process"/>
    <property type="evidence" value="ECO:0007669"/>
    <property type="project" value="TreeGrafter"/>
</dbReference>
<dbReference type="GO" id="GO:0019563">
    <property type="term" value="P:glycerol catabolic process"/>
    <property type="evidence" value="ECO:0007669"/>
    <property type="project" value="TreeGrafter"/>
</dbReference>
<dbReference type="GO" id="GO:0006096">
    <property type="term" value="P:glycolytic process"/>
    <property type="evidence" value="ECO:0007669"/>
    <property type="project" value="UniProtKB-UniRule"/>
</dbReference>
<dbReference type="CDD" id="cd00311">
    <property type="entry name" value="TIM"/>
    <property type="match status" value="1"/>
</dbReference>
<dbReference type="Gene3D" id="3.20.20.70">
    <property type="entry name" value="Aldolase class I"/>
    <property type="match status" value="1"/>
</dbReference>
<dbReference type="HAMAP" id="MF_00147_B">
    <property type="entry name" value="TIM_B"/>
    <property type="match status" value="1"/>
</dbReference>
<dbReference type="InterPro" id="IPR013785">
    <property type="entry name" value="Aldolase_TIM"/>
</dbReference>
<dbReference type="InterPro" id="IPR035990">
    <property type="entry name" value="TIM_sf"/>
</dbReference>
<dbReference type="InterPro" id="IPR022896">
    <property type="entry name" value="TrioseP_Isoase_bac/euk"/>
</dbReference>
<dbReference type="InterPro" id="IPR000652">
    <property type="entry name" value="Triosephosphate_isomerase"/>
</dbReference>
<dbReference type="InterPro" id="IPR020861">
    <property type="entry name" value="Triosephosphate_isomerase_AS"/>
</dbReference>
<dbReference type="NCBIfam" id="NF000728">
    <property type="entry name" value="PRK00042.3-2"/>
    <property type="match status" value="1"/>
</dbReference>
<dbReference type="PANTHER" id="PTHR21139">
    <property type="entry name" value="TRIOSEPHOSPHATE ISOMERASE"/>
    <property type="match status" value="1"/>
</dbReference>
<dbReference type="PANTHER" id="PTHR21139:SF42">
    <property type="entry name" value="TRIOSEPHOSPHATE ISOMERASE"/>
    <property type="match status" value="1"/>
</dbReference>
<dbReference type="Pfam" id="PF00121">
    <property type="entry name" value="TIM"/>
    <property type="match status" value="1"/>
</dbReference>
<dbReference type="SUPFAM" id="SSF51351">
    <property type="entry name" value="Triosephosphate isomerase (TIM)"/>
    <property type="match status" value="1"/>
</dbReference>
<dbReference type="PROSITE" id="PS00171">
    <property type="entry name" value="TIM_1"/>
    <property type="match status" value="1"/>
</dbReference>
<dbReference type="PROSITE" id="PS51440">
    <property type="entry name" value="TIM_2"/>
    <property type="match status" value="1"/>
</dbReference>
<accession>A7I1G2</accession>
<gene>
    <name evidence="1" type="primary">tpiA</name>
    <name type="ordered locus">CHAB381_0779</name>
</gene>
<name>TPIS_CAMHC</name>
<comment type="function">
    <text evidence="1">Involved in the gluconeogenesis. Catalyzes stereospecifically the conversion of dihydroxyacetone phosphate (DHAP) to D-glyceraldehyde-3-phosphate (G3P).</text>
</comment>
<comment type="catalytic activity">
    <reaction evidence="1">
        <text>D-glyceraldehyde 3-phosphate = dihydroxyacetone phosphate</text>
        <dbReference type="Rhea" id="RHEA:18585"/>
        <dbReference type="ChEBI" id="CHEBI:57642"/>
        <dbReference type="ChEBI" id="CHEBI:59776"/>
        <dbReference type="EC" id="5.3.1.1"/>
    </reaction>
</comment>
<comment type="pathway">
    <text evidence="1">Carbohydrate biosynthesis; gluconeogenesis.</text>
</comment>
<comment type="pathway">
    <text evidence="1">Carbohydrate degradation; glycolysis; D-glyceraldehyde 3-phosphate from glycerone phosphate: step 1/1.</text>
</comment>
<comment type="subunit">
    <text evidence="1">Homodimer.</text>
</comment>
<comment type="subcellular location">
    <subcellularLocation>
        <location evidence="1">Cytoplasm</location>
    </subcellularLocation>
</comment>
<comment type="similarity">
    <text evidence="1">Belongs to the triosephosphate isomerase family.</text>
</comment>
<feature type="chain" id="PRO_1000009842" description="Triosephosphate isomerase">
    <location>
        <begin position="1"/>
        <end position="232"/>
    </location>
</feature>
<feature type="active site" description="Electrophile" evidence="1">
    <location>
        <position position="91"/>
    </location>
</feature>
<feature type="active site" description="Proton acceptor" evidence="1">
    <location>
        <position position="158"/>
    </location>
</feature>
<feature type="binding site" evidence="1">
    <location>
        <begin position="6"/>
        <end position="8"/>
    </location>
    <ligand>
        <name>substrate</name>
    </ligand>
</feature>
<feature type="binding site" evidence="1">
    <location>
        <position position="164"/>
    </location>
    <ligand>
        <name>substrate</name>
    </ligand>
</feature>
<feature type="binding site" evidence="1">
    <location>
        <position position="194"/>
    </location>
    <ligand>
        <name>substrate</name>
    </ligand>
</feature>
<evidence type="ECO:0000255" key="1">
    <source>
        <dbReference type="HAMAP-Rule" id="MF_00147"/>
    </source>
</evidence>
<proteinExistence type="inferred from homology"/>
<keyword id="KW-0963">Cytoplasm</keyword>
<keyword id="KW-0312">Gluconeogenesis</keyword>
<keyword id="KW-0324">Glycolysis</keyword>
<keyword id="KW-0413">Isomerase</keyword>
<keyword id="KW-1185">Reference proteome</keyword>
<reference key="1">
    <citation type="submission" date="2007-07" db="EMBL/GenBank/DDBJ databases">
        <title>Complete genome sequence of Campylobacter hominis ATCC BAA-381, a commensal isolated from the human gastrointestinal tract.</title>
        <authorList>
            <person name="Fouts D.E."/>
            <person name="Mongodin E.F."/>
            <person name="Puiu D."/>
            <person name="Sebastian Y."/>
            <person name="Miller W.G."/>
            <person name="Mandrell R.E."/>
            <person name="Nelson K.E."/>
        </authorList>
    </citation>
    <scope>NUCLEOTIDE SEQUENCE [LARGE SCALE GENOMIC DNA]</scope>
    <source>
        <strain>ATCC BAA-381 / DSM 21671 / CCUG 45161 / LMG 19568 / NCTC 13146 / CH001A</strain>
    </source>
</reference>
<organism>
    <name type="scientific">Campylobacter hominis (strain ATCC BAA-381 / DSM 21671 / CCUG 45161 / LMG 19568 / NCTC 13146 / CH001A)</name>
    <dbReference type="NCBI Taxonomy" id="360107"/>
    <lineage>
        <taxon>Bacteria</taxon>
        <taxon>Pseudomonadati</taxon>
        <taxon>Campylobacterota</taxon>
        <taxon>Epsilonproteobacteria</taxon>
        <taxon>Campylobacterales</taxon>
        <taxon>Campylobacteraceae</taxon>
        <taxon>Campylobacter</taxon>
    </lineage>
</organism>
<sequence>MIVAANLKCNHTRASFLNFTKKLDNFLSGEASNFKKNEILIFPPNTAFCDQISNFTQGAQNFFPCENGSFTGEIGADMLNEFGIKSVLIGHSERRVIFSESDRMVLEKFKFAKKRGWRIIFCVGESDIVRMNGNYREVLSDQLSEIDLDYENLIIAYEPIWAIGTGKSAKNEQIEEVLEFLAEKTEAPLLYGGSVNLKNISQISKLPHCSGVLIGSASWEAENFINLLKELQ</sequence>